<sequence>MTFDAARYTAQLQDKVTRLRDLLAPFDAPEPQVFDSPLQNFRLRAEFRLWREGGERHYAMFSQDDKRTPILIEEFPIASQRINQLMPQLKAAWQASAALSHKLFQVEFLTTLAGDAMITLCYHRPLDEHWHTAANKLATDLNVSIIGRSKGKRDVIGHDYVVEKLEVGGRTFSYRQPEGAFTQPNGTVNQKMLNWAYDALGDRPDDLLELYCGNGNFTLPLATRVRKVLATEISKTSVNAALSNLDENAVGNVTLVRLSAEELTEALNEVRPFRRLHGIDLKRYEFSSVFVDPPRAGMDPDTCELTRRFDNILYISCNPETLAANIAQLHDTHRITKCAMFDQFPWTHHMESGVLLTRR</sequence>
<keyword id="KW-0489">Methyltransferase</keyword>
<keyword id="KW-0949">S-adenosyl-L-methionine</keyword>
<keyword id="KW-0808">Transferase</keyword>
<keyword id="KW-0819">tRNA processing</keyword>
<feature type="chain" id="PRO_0000388563" description="tRNA/tmRNA (uracil-C(5))-methyltransferase">
    <location>
        <begin position="1"/>
        <end position="359"/>
    </location>
</feature>
<feature type="active site" description="Nucleophile" evidence="1">
    <location>
        <position position="317"/>
    </location>
</feature>
<feature type="active site" description="Proton acceptor" evidence="1">
    <location>
        <position position="351"/>
    </location>
</feature>
<feature type="binding site" evidence="1">
    <location>
        <position position="183"/>
    </location>
    <ligand>
        <name>S-adenosyl-L-methionine</name>
        <dbReference type="ChEBI" id="CHEBI:59789"/>
    </ligand>
</feature>
<feature type="binding site" evidence="1">
    <location>
        <position position="211"/>
    </location>
    <ligand>
        <name>S-adenosyl-L-methionine</name>
        <dbReference type="ChEBI" id="CHEBI:59789"/>
    </ligand>
</feature>
<feature type="binding site" evidence="1">
    <location>
        <position position="216"/>
    </location>
    <ligand>
        <name>S-adenosyl-L-methionine</name>
        <dbReference type="ChEBI" id="CHEBI:59789"/>
    </ligand>
</feature>
<feature type="binding site" evidence="1">
    <location>
        <position position="232"/>
    </location>
    <ligand>
        <name>S-adenosyl-L-methionine</name>
        <dbReference type="ChEBI" id="CHEBI:59789"/>
    </ligand>
</feature>
<feature type="binding site" evidence="1">
    <location>
        <position position="292"/>
    </location>
    <ligand>
        <name>S-adenosyl-L-methionine</name>
        <dbReference type="ChEBI" id="CHEBI:59789"/>
    </ligand>
</feature>
<reference key="1">
    <citation type="journal article" date="2009" name="Genome Biol.">
        <title>Genomic and genetic analyses of diversity and plant interactions of Pseudomonas fluorescens.</title>
        <authorList>
            <person name="Silby M.W."/>
            <person name="Cerdeno-Tarraga A.M."/>
            <person name="Vernikos G.S."/>
            <person name="Giddens S.R."/>
            <person name="Jackson R.W."/>
            <person name="Preston G.M."/>
            <person name="Zhang X.-X."/>
            <person name="Moon C.D."/>
            <person name="Gehrig S.M."/>
            <person name="Godfrey S.A.C."/>
            <person name="Knight C.G."/>
            <person name="Malone J.G."/>
            <person name="Robinson Z."/>
            <person name="Spiers A.J."/>
            <person name="Harris S."/>
            <person name="Challis G.L."/>
            <person name="Yaxley A.M."/>
            <person name="Harris D."/>
            <person name="Seeger K."/>
            <person name="Murphy L."/>
            <person name="Rutter S."/>
            <person name="Squares R."/>
            <person name="Quail M.A."/>
            <person name="Saunders E."/>
            <person name="Mavromatis K."/>
            <person name="Brettin T.S."/>
            <person name="Bentley S.D."/>
            <person name="Hothersall J."/>
            <person name="Stephens E."/>
            <person name="Thomas C.M."/>
            <person name="Parkhill J."/>
            <person name="Levy S.B."/>
            <person name="Rainey P.B."/>
            <person name="Thomson N.R."/>
        </authorList>
    </citation>
    <scope>NUCLEOTIDE SEQUENCE [LARGE SCALE GENOMIC DNA]</scope>
    <source>
        <strain>SBW25</strain>
    </source>
</reference>
<name>TRMA_PSEFS</name>
<proteinExistence type="inferred from homology"/>
<dbReference type="EC" id="2.1.1.-" evidence="1"/>
<dbReference type="EC" id="2.1.1.35" evidence="1"/>
<dbReference type="EMBL" id="AM181176">
    <property type="protein sequence ID" value="CAY52496.1"/>
    <property type="molecule type" value="Genomic_DNA"/>
</dbReference>
<dbReference type="RefSeq" id="WP_015886002.1">
    <property type="nucleotide sequence ID" value="NC_012660.1"/>
</dbReference>
<dbReference type="SMR" id="C3K2F6"/>
<dbReference type="STRING" id="294.SRM1_04951"/>
<dbReference type="PATRIC" id="fig|216595.4.peg.5477"/>
<dbReference type="eggNOG" id="COG2265">
    <property type="taxonomic scope" value="Bacteria"/>
</dbReference>
<dbReference type="HOGENOM" id="CLU_043022_0_0_6"/>
<dbReference type="OrthoDB" id="9804590at2"/>
<dbReference type="GO" id="GO:0005829">
    <property type="term" value="C:cytosol"/>
    <property type="evidence" value="ECO:0007669"/>
    <property type="project" value="TreeGrafter"/>
</dbReference>
<dbReference type="GO" id="GO:0019843">
    <property type="term" value="F:rRNA binding"/>
    <property type="evidence" value="ECO:0007669"/>
    <property type="project" value="TreeGrafter"/>
</dbReference>
<dbReference type="GO" id="GO:0030697">
    <property type="term" value="F:tRNA (uracil(54)-C5)-methyltransferase activity, S-adenosyl methionine-dependent"/>
    <property type="evidence" value="ECO:0007669"/>
    <property type="project" value="UniProtKB-UniRule"/>
</dbReference>
<dbReference type="GO" id="GO:0000049">
    <property type="term" value="F:tRNA binding"/>
    <property type="evidence" value="ECO:0007669"/>
    <property type="project" value="TreeGrafter"/>
</dbReference>
<dbReference type="GO" id="GO:0030488">
    <property type="term" value="P:tRNA methylation"/>
    <property type="evidence" value="ECO:0007669"/>
    <property type="project" value="UniProtKB-UniRule"/>
</dbReference>
<dbReference type="CDD" id="cd02440">
    <property type="entry name" value="AdoMet_MTases"/>
    <property type="match status" value="1"/>
</dbReference>
<dbReference type="FunFam" id="2.40.50.1070:FF:000001">
    <property type="entry name" value="tRNA/tmRNA (uracil-C(5))-methyltransferase"/>
    <property type="match status" value="1"/>
</dbReference>
<dbReference type="FunFam" id="3.40.50.150:FF:000012">
    <property type="entry name" value="tRNA/tmRNA (uracil-C(5))-methyltransferase"/>
    <property type="match status" value="1"/>
</dbReference>
<dbReference type="Gene3D" id="2.40.50.1070">
    <property type="match status" value="1"/>
</dbReference>
<dbReference type="Gene3D" id="3.40.50.150">
    <property type="entry name" value="Vaccinia Virus protein VP39"/>
    <property type="match status" value="1"/>
</dbReference>
<dbReference type="HAMAP" id="MF_01011">
    <property type="entry name" value="RNA_methyltr_TrmA"/>
    <property type="match status" value="1"/>
</dbReference>
<dbReference type="InterPro" id="IPR030390">
    <property type="entry name" value="MeTrfase_TrmA_AS"/>
</dbReference>
<dbReference type="InterPro" id="IPR030391">
    <property type="entry name" value="MeTrfase_TrmA_CS"/>
</dbReference>
<dbReference type="InterPro" id="IPR029063">
    <property type="entry name" value="SAM-dependent_MTases_sf"/>
</dbReference>
<dbReference type="InterPro" id="IPR011869">
    <property type="entry name" value="TrmA_MeTrfase"/>
</dbReference>
<dbReference type="InterPro" id="IPR010280">
    <property type="entry name" value="U5_MeTrfase_fam"/>
</dbReference>
<dbReference type="NCBIfam" id="TIGR02143">
    <property type="entry name" value="trmA_only"/>
    <property type="match status" value="1"/>
</dbReference>
<dbReference type="PANTHER" id="PTHR47790">
    <property type="entry name" value="TRNA/TMRNA (URACIL-C(5))-METHYLTRANSFERASE"/>
    <property type="match status" value="1"/>
</dbReference>
<dbReference type="PANTHER" id="PTHR47790:SF2">
    <property type="entry name" value="TRNA_TMRNA (URACIL-C(5))-METHYLTRANSFERASE"/>
    <property type="match status" value="1"/>
</dbReference>
<dbReference type="Pfam" id="PF05958">
    <property type="entry name" value="tRNA_U5-meth_tr"/>
    <property type="match status" value="1"/>
</dbReference>
<dbReference type="SUPFAM" id="SSF53335">
    <property type="entry name" value="S-adenosyl-L-methionine-dependent methyltransferases"/>
    <property type="match status" value="1"/>
</dbReference>
<dbReference type="PROSITE" id="PS51687">
    <property type="entry name" value="SAM_MT_RNA_M5U"/>
    <property type="match status" value="1"/>
</dbReference>
<dbReference type="PROSITE" id="PS01230">
    <property type="entry name" value="TRMA_1"/>
    <property type="match status" value="1"/>
</dbReference>
<dbReference type="PROSITE" id="PS01231">
    <property type="entry name" value="TRMA_2"/>
    <property type="match status" value="1"/>
</dbReference>
<gene>
    <name evidence="1" type="primary">trmA</name>
    <name type="ordered locus">PFLU_5353</name>
</gene>
<accession>C3K2F6</accession>
<protein>
    <recommendedName>
        <fullName evidence="1">tRNA/tmRNA (uracil-C(5))-methyltransferase</fullName>
        <ecNumber evidence="1">2.1.1.-</ecNumber>
        <ecNumber evidence="1">2.1.1.35</ecNumber>
    </recommendedName>
    <alternativeName>
        <fullName evidence="1">tRNA (uracil(54)-C(5))-methyltransferase</fullName>
    </alternativeName>
    <alternativeName>
        <fullName evidence="1">tRNA(m5U54)-methyltransferase</fullName>
        <shortName evidence="1">RUMT</shortName>
    </alternativeName>
    <alternativeName>
        <fullName evidence="1">tmRNA (uracil(341)-C(5))-methyltransferase</fullName>
    </alternativeName>
</protein>
<evidence type="ECO:0000255" key="1">
    <source>
        <dbReference type="HAMAP-Rule" id="MF_01011"/>
    </source>
</evidence>
<organism>
    <name type="scientific">Pseudomonas fluorescens (strain SBW25)</name>
    <dbReference type="NCBI Taxonomy" id="216595"/>
    <lineage>
        <taxon>Bacteria</taxon>
        <taxon>Pseudomonadati</taxon>
        <taxon>Pseudomonadota</taxon>
        <taxon>Gammaproteobacteria</taxon>
        <taxon>Pseudomonadales</taxon>
        <taxon>Pseudomonadaceae</taxon>
        <taxon>Pseudomonas</taxon>
    </lineage>
</organism>
<comment type="function">
    <text evidence="1">Dual-specificity methyltransferase that catalyzes the formation of 5-methyluridine at position 54 (m5U54) in all tRNAs, and that of position 341 (m5U341) in tmRNA (transfer-mRNA).</text>
</comment>
<comment type="catalytic activity">
    <reaction evidence="1">
        <text>uridine(54) in tRNA + S-adenosyl-L-methionine = 5-methyluridine(54) in tRNA + S-adenosyl-L-homocysteine + H(+)</text>
        <dbReference type="Rhea" id="RHEA:42712"/>
        <dbReference type="Rhea" id="RHEA-COMP:10167"/>
        <dbReference type="Rhea" id="RHEA-COMP:10193"/>
        <dbReference type="ChEBI" id="CHEBI:15378"/>
        <dbReference type="ChEBI" id="CHEBI:57856"/>
        <dbReference type="ChEBI" id="CHEBI:59789"/>
        <dbReference type="ChEBI" id="CHEBI:65315"/>
        <dbReference type="ChEBI" id="CHEBI:74447"/>
        <dbReference type="EC" id="2.1.1.35"/>
    </reaction>
</comment>
<comment type="catalytic activity">
    <reaction evidence="1">
        <text>uridine(341) in tmRNA + S-adenosyl-L-methionine = 5-methyluridine(341) in tmRNA + S-adenosyl-L-homocysteine + H(+)</text>
        <dbReference type="Rhea" id="RHEA:43612"/>
        <dbReference type="Rhea" id="RHEA-COMP:10630"/>
        <dbReference type="Rhea" id="RHEA-COMP:10631"/>
        <dbReference type="ChEBI" id="CHEBI:15378"/>
        <dbReference type="ChEBI" id="CHEBI:57856"/>
        <dbReference type="ChEBI" id="CHEBI:59789"/>
        <dbReference type="ChEBI" id="CHEBI:65315"/>
        <dbReference type="ChEBI" id="CHEBI:74447"/>
    </reaction>
</comment>
<comment type="similarity">
    <text evidence="1">Belongs to the class I-like SAM-binding methyltransferase superfamily. RNA M5U methyltransferase family. TrmA subfamily.</text>
</comment>